<accession>Q9M9E9</accession>
<accession>Q8L8P8</accession>
<gene>
    <name type="primary">SRK2C</name>
    <name type="synonym">OSKL4</name>
    <name type="synonym">SNRK2.8</name>
    <name type="ordered locus">At1g78290</name>
    <name type="ORF">F3F9.17</name>
</gene>
<comment type="function">
    <text evidence="5">Involved in gene regulation and confers tolerance to drought and osmotic stress.</text>
</comment>
<comment type="catalytic activity">
    <reaction>
        <text>L-seryl-[protein] + ATP = O-phospho-L-seryl-[protein] + ADP + H(+)</text>
        <dbReference type="Rhea" id="RHEA:17989"/>
        <dbReference type="Rhea" id="RHEA-COMP:9863"/>
        <dbReference type="Rhea" id="RHEA-COMP:11604"/>
        <dbReference type="ChEBI" id="CHEBI:15378"/>
        <dbReference type="ChEBI" id="CHEBI:29999"/>
        <dbReference type="ChEBI" id="CHEBI:30616"/>
        <dbReference type="ChEBI" id="CHEBI:83421"/>
        <dbReference type="ChEBI" id="CHEBI:456216"/>
        <dbReference type="EC" id="2.7.11.1"/>
    </reaction>
</comment>
<comment type="catalytic activity">
    <reaction>
        <text>L-threonyl-[protein] + ATP = O-phospho-L-threonyl-[protein] + ADP + H(+)</text>
        <dbReference type="Rhea" id="RHEA:46608"/>
        <dbReference type="Rhea" id="RHEA-COMP:11060"/>
        <dbReference type="Rhea" id="RHEA-COMP:11605"/>
        <dbReference type="ChEBI" id="CHEBI:15378"/>
        <dbReference type="ChEBI" id="CHEBI:30013"/>
        <dbReference type="ChEBI" id="CHEBI:30616"/>
        <dbReference type="ChEBI" id="CHEBI:61977"/>
        <dbReference type="ChEBI" id="CHEBI:456216"/>
        <dbReference type="EC" id="2.7.11.1"/>
    </reaction>
</comment>
<comment type="subunit">
    <text evidence="6">Interacts with I-2 and TOPP1.</text>
</comment>
<comment type="tissue specificity">
    <text evidence="4">Expressed in seedlings.</text>
</comment>
<comment type="induction">
    <text evidence="4 5">By abscisic acid (ABA), cold, H(2)O(2), salt, and osmotic stress (at protein level).</text>
</comment>
<comment type="similarity">
    <text evidence="2">Belongs to the protein kinase superfamily. Ser/Thr protein kinase family.</text>
</comment>
<name>SRK2C_ARATH</name>
<reference key="1">
    <citation type="journal article" date="2000" name="Nature">
        <title>Sequence and analysis of chromosome 1 of the plant Arabidopsis thaliana.</title>
        <authorList>
            <person name="Theologis A."/>
            <person name="Ecker J.R."/>
            <person name="Palm C.J."/>
            <person name="Federspiel N.A."/>
            <person name="Kaul S."/>
            <person name="White O."/>
            <person name="Alonso J."/>
            <person name="Altafi H."/>
            <person name="Araujo R."/>
            <person name="Bowman C.L."/>
            <person name="Brooks S.Y."/>
            <person name="Buehler E."/>
            <person name="Chan A."/>
            <person name="Chao Q."/>
            <person name="Chen H."/>
            <person name="Cheuk R.F."/>
            <person name="Chin C.W."/>
            <person name="Chung M.K."/>
            <person name="Conn L."/>
            <person name="Conway A.B."/>
            <person name="Conway A.R."/>
            <person name="Creasy T.H."/>
            <person name="Dewar K."/>
            <person name="Dunn P."/>
            <person name="Etgu P."/>
            <person name="Feldblyum T.V."/>
            <person name="Feng J.-D."/>
            <person name="Fong B."/>
            <person name="Fujii C.Y."/>
            <person name="Gill J.E."/>
            <person name="Goldsmith A.D."/>
            <person name="Haas B."/>
            <person name="Hansen N.F."/>
            <person name="Hughes B."/>
            <person name="Huizar L."/>
            <person name="Hunter J.L."/>
            <person name="Jenkins J."/>
            <person name="Johnson-Hopson C."/>
            <person name="Khan S."/>
            <person name="Khaykin E."/>
            <person name="Kim C.J."/>
            <person name="Koo H.L."/>
            <person name="Kremenetskaia I."/>
            <person name="Kurtz D.B."/>
            <person name="Kwan A."/>
            <person name="Lam B."/>
            <person name="Langin-Hooper S."/>
            <person name="Lee A."/>
            <person name="Lee J.M."/>
            <person name="Lenz C.A."/>
            <person name="Li J.H."/>
            <person name="Li Y.-P."/>
            <person name="Lin X."/>
            <person name="Liu S.X."/>
            <person name="Liu Z.A."/>
            <person name="Luros J.S."/>
            <person name="Maiti R."/>
            <person name="Marziali A."/>
            <person name="Militscher J."/>
            <person name="Miranda M."/>
            <person name="Nguyen M."/>
            <person name="Nierman W.C."/>
            <person name="Osborne B.I."/>
            <person name="Pai G."/>
            <person name="Peterson J."/>
            <person name="Pham P.K."/>
            <person name="Rizzo M."/>
            <person name="Rooney T."/>
            <person name="Rowley D."/>
            <person name="Sakano H."/>
            <person name="Salzberg S.L."/>
            <person name="Schwartz J.R."/>
            <person name="Shinn P."/>
            <person name="Southwick A.M."/>
            <person name="Sun H."/>
            <person name="Tallon L.J."/>
            <person name="Tambunga G."/>
            <person name="Toriumi M.J."/>
            <person name="Town C.D."/>
            <person name="Utterback T."/>
            <person name="Van Aken S."/>
            <person name="Vaysberg M."/>
            <person name="Vysotskaia V.S."/>
            <person name="Walker M."/>
            <person name="Wu D."/>
            <person name="Yu G."/>
            <person name="Fraser C.M."/>
            <person name="Venter J.C."/>
            <person name="Davis R.W."/>
        </authorList>
    </citation>
    <scope>NUCLEOTIDE SEQUENCE [LARGE SCALE GENOMIC DNA]</scope>
    <source>
        <strain>cv. Columbia</strain>
    </source>
</reference>
<reference key="2">
    <citation type="journal article" date="2017" name="Plant J.">
        <title>Araport11: a complete reannotation of the Arabidopsis thaliana reference genome.</title>
        <authorList>
            <person name="Cheng C.Y."/>
            <person name="Krishnakumar V."/>
            <person name="Chan A.P."/>
            <person name="Thibaud-Nissen F."/>
            <person name="Schobel S."/>
            <person name="Town C.D."/>
        </authorList>
    </citation>
    <scope>GENOME REANNOTATION</scope>
    <source>
        <strain>cv. Columbia</strain>
    </source>
</reference>
<reference key="3">
    <citation type="journal article" date="2003" name="Science">
        <title>Empirical analysis of transcriptional activity in the Arabidopsis genome.</title>
        <authorList>
            <person name="Yamada K."/>
            <person name="Lim J."/>
            <person name="Dale J.M."/>
            <person name="Chen H."/>
            <person name="Shinn P."/>
            <person name="Palm C.J."/>
            <person name="Southwick A.M."/>
            <person name="Wu H.C."/>
            <person name="Kim C.J."/>
            <person name="Nguyen M."/>
            <person name="Pham P.K."/>
            <person name="Cheuk R.F."/>
            <person name="Karlin-Newmann G."/>
            <person name="Liu S.X."/>
            <person name="Lam B."/>
            <person name="Sakano H."/>
            <person name="Wu T."/>
            <person name="Yu G."/>
            <person name="Miranda M."/>
            <person name="Quach H.L."/>
            <person name="Tripp M."/>
            <person name="Chang C.H."/>
            <person name="Lee J.M."/>
            <person name="Toriumi M.J."/>
            <person name="Chan M.M."/>
            <person name="Tang C.C."/>
            <person name="Onodera C.S."/>
            <person name="Deng J.M."/>
            <person name="Akiyama K."/>
            <person name="Ansari Y."/>
            <person name="Arakawa T."/>
            <person name="Banh J."/>
            <person name="Banno F."/>
            <person name="Bowser L."/>
            <person name="Brooks S.Y."/>
            <person name="Carninci P."/>
            <person name="Chao Q."/>
            <person name="Choy N."/>
            <person name="Enju A."/>
            <person name="Goldsmith A.D."/>
            <person name="Gurjal M."/>
            <person name="Hansen N.F."/>
            <person name="Hayashizaki Y."/>
            <person name="Johnson-Hopson C."/>
            <person name="Hsuan V.W."/>
            <person name="Iida K."/>
            <person name="Karnes M."/>
            <person name="Khan S."/>
            <person name="Koesema E."/>
            <person name="Ishida J."/>
            <person name="Jiang P.X."/>
            <person name="Jones T."/>
            <person name="Kawai J."/>
            <person name="Kamiya A."/>
            <person name="Meyers C."/>
            <person name="Nakajima M."/>
            <person name="Narusaka M."/>
            <person name="Seki M."/>
            <person name="Sakurai T."/>
            <person name="Satou M."/>
            <person name="Tamse R."/>
            <person name="Vaysberg M."/>
            <person name="Wallender E.K."/>
            <person name="Wong C."/>
            <person name="Yamamura Y."/>
            <person name="Yuan S."/>
            <person name="Shinozaki K."/>
            <person name="Davis R.W."/>
            <person name="Theologis A."/>
            <person name="Ecker J.R."/>
        </authorList>
    </citation>
    <scope>NUCLEOTIDE SEQUENCE [LARGE SCALE MRNA]</scope>
    <source>
        <strain>cv. Columbia</strain>
    </source>
</reference>
<reference key="4">
    <citation type="submission" date="2005-02" db="EMBL/GenBank/DDBJ databases">
        <title>Arabidopsis ORF clones.</title>
        <authorList>
            <person name="Cheuk R.F."/>
            <person name="Chen H."/>
            <person name="Kim C.J."/>
            <person name="Shinn P."/>
            <person name="Ecker J.R."/>
        </authorList>
    </citation>
    <scope>NUCLEOTIDE SEQUENCE [LARGE SCALE MRNA]</scope>
    <source>
        <strain>cv. Columbia</strain>
    </source>
</reference>
<reference key="5">
    <citation type="submission" date="2002-03" db="EMBL/GenBank/DDBJ databases">
        <title>Full-length cDNA from Arabidopsis thaliana.</title>
        <authorList>
            <person name="Brover V.V."/>
            <person name="Troukhan M.E."/>
            <person name="Alexandrov N.A."/>
            <person name="Lu Y.-P."/>
            <person name="Flavell R.B."/>
            <person name="Feldmann K.A."/>
        </authorList>
    </citation>
    <scope>NUCLEOTIDE SEQUENCE [LARGE SCALE MRNA]</scope>
</reference>
<reference key="6">
    <citation type="journal article" date="2003" name="Plant Physiol.">
        <title>The Arabidopsis CDPK-SnRK superfamily of protein kinases.</title>
        <authorList>
            <person name="Hrabak E.M."/>
            <person name="Chan C.W.M."/>
            <person name="Gribskov M."/>
            <person name="Harper J.F."/>
            <person name="Choi J.H."/>
            <person name="Halford N."/>
            <person name="Kudla J."/>
            <person name="Luan S."/>
            <person name="Nimmo H.G."/>
            <person name="Sussman M.R."/>
            <person name="Thomas M."/>
            <person name="Walker-Simmons K."/>
            <person name="Zhu J.-K."/>
            <person name="Harmon A.C."/>
        </authorList>
    </citation>
    <scope>GENE FAMILY</scope>
    <scope>NOMENCLATURE</scope>
</reference>
<reference key="7">
    <citation type="journal article" date="2004" name="J. Biol. Chem.">
        <title>Identification of nine sucrose nonfermenting 1-related protein kinases 2 activated by hyperosmotic and saline stresses in Arabidopsis thaliana.</title>
        <authorList>
            <person name="Boudsocq M."/>
            <person name="Barbier-Brygoo H."/>
            <person name="Lauriere C."/>
        </authorList>
    </citation>
    <scope>TISSUE SPECIFICITY</scope>
    <scope>INDUCTION</scope>
</reference>
<reference key="8">
    <citation type="journal article" date="2004" name="Proc. Natl. Acad. Sci. U.S.A.">
        <title>SRK2C, a SNF1-related protein kinase 2, improves drought tolerance by controlling stress-responsive gene expression in Arabidopsis thaliana.</title>
        <authorList>
            <person name="Umezawa T."/>
            <person name="Yoshida R."/>
            <person name="Maruyama K."/>
            <person name="Yamaguchi-Shinozaki K."/>
            <person name="Shinozaki K."/>
        </authorList>
    </citation>
    <scope>FUNCTION</scope>
    <scope>INDUCTION</scope>
</reference>
<reference key="9">
    <citation type="journal article" date="2006" name="J. Biol. Chem.">
        <title>The regulatory domain of SRK2E/OST1/SnRK2.6 interacts with ABI1 and integrates abscisic acid (ABA) and osmotic stress signals controlling stomatal closure in Arabidopsis.</title>
        <authorList>
            <person name="Yoshida R."/>
            <person name="Umezawa T."/>
            <person name="Mizoguchi T."/>
            <person name="Takahashi S."/>
            <person name="Takahashi F."/>
            <person name="Shinozaki K."/>
        </authorList>
    </citation>
    <scope>GENE FAMILY</scope>
</reference>
<reference key="10">
    <citation type="journal article" date="2016" name="PLoS Genet.">
        <title>Type one protein phosphatase 1 and its regulatory protein inhibitor 2 negatively regulate ABA signaling.</title>
        <authorList>
            <person name="Hou Y.J."/>
            <person name="Zhu Y."/>
            <person name="Wang P."/>
            <person name="Zhao Y."/>
            <person name="Xie S."/>
            <person name="Batelli G."/>
            <person name="Wang B."/>
            <person name="Duan C.G."/>
            <person name="Wang X."/>
            <person name="Xing L."/>
            <person name="Lei M."/>
            <person name="Yan J."/>
            <person name="Zhu X."/>
            <person name="Zhu J.K."/>
        </authorList>
    </citation>
    <scope>INTERACTION WITH I-2 AND TOPP1</scope>
</reference>
<organism>
    <name type="scientific">Arabidopsis thaliana</name>
    <name type="common">Mouse-ear cress</name>
    <dbReference type="NCBI Taxonomy" id="3702"/>
    <lineage>
        <taxon>Eukaryota</taxon>
        <taxon>Viridiplantae</taxon>
        <taxon>Streptophyta</taxon>
        <taxon>Embryophyta</taxon>
        <taxon>Tracheophyta</taxon>
        <taxon>Spermatophyta</taxon>
        <taxon>Magnoliopsida</taxon>
        <taxon>eudicotyledons</taxon>
        <taxon>Gunneridae</taxon>
        <taxon>Pentapetalae</taxon>
        <taxon>rosids</taxon>
        <taxon>malvids</taxon>
        <taxon>Brassicales</taxon>
        <taxon>Brassicaceae</taxon>
        <taxon>Camelineae</taxon>
        <taxon>Arabidopsis</taxon>
    </lineage>
</organism>
<feature type="chain" id="PRO_0000345158" description="Serine/threonine-protein kinase SRK2C">
    <location>
        <begin position="1"/>
        <end position="343"/>
    </location>
</feature>
<feature type="domain" description="Protein kinase" evidence="2">
    <location>
        <begin position="4"/>
        <end position="260"/>
    </location>
</feature>
<feature type="active site" description="Proton acceptor" evidence="2 3">
    <location>
        <position position="123"/>
    </location>
</feature>
<feature type="binding site" evidence="2">
    <location>
        <begin position="10"/>
        <end position="18"/>
    </location>
    <ligand>
        <name>ATP</name>
        <dbReference type="ChEBI" id="CHEBI:30616"/>
    </ligand>
</feature>
<feature type="binding site" evidence="2">
    <location>
        <position position="33"/>
    </location>
    <ligand>
        <name>ATP</name>
        <dbReference type="ChEBI" id="CHEBI:30616"/>
    </ligand>
</feature>
<feature type="modified residue" description="Phosphothreonine" evidence="1">
    <location>
        <position position="158"/>
    </location>
</feature>
<feature type="sequence conflict" description="In Ref. 5; AAM67189." evidence="7" ref="5">
    <original>E</original>
    <variation>K</variation>
    <location>
        <position position="232"/>
    </location>
</feature>
<proteinExistence type="evidence at protein level"/>
<evidence type="ECO:0000250" key="1">
    <source>
        <dbReference type="UniProtKB" id="Q38997"/>
    </source>
</evidence>
<evidence type="ECO:0000255" key="2">
    <source>
        <dbReference type="PROSITE-ProRule" id="PRU00159"/>
    </source>
</evidence>
<evidence type="ECO:0000255" key="3">
    <source>
        <dbReference type="PROSITE-ProRule" id="PRU10027"/>
    </source>
</evidence>
<evidence type="ECO:0000269" key="4">
    <source>
    </source>
</evidence>
<evidence type="ECO:0000269" key="5">
    <source>
    </source>
</evidence>
<evidence type="ECO:0000269" key="6">
    <source>
    </source>
</evidence>
<evidence type="ECO:0000305" key="7"/>
<protein>
    <recommendedName>
        <fullName>Serine/threonine-protein kinase SRK2C</fullName>
        <ecNumber>2.7.11.1</ecNumber>
    </recommendedName>
    <alternativeName>
        <fullName>OST1-kinase-like 4</fullName>
    </alternativeName>
    <alternativeName>
        <fullName>SNF1-related kinase 2.8</fullName>
        <shortName>SnRK2.8</shortName>
    </alternativeName>
</protein>
<keyword id="KW-0067">ATP-binding</keyword>
<keyword id="KW-0418">Kinase</keyword>
<keyword id="KW-0547">Nucleotide-binding</keyword>
<keyword id="KW-0597">Phosphoprotein</keyword>
<keyword id="KW-1185">Reference proteome</keyword>
<keyword id="KW-0723">Serine/threonine-protein kinase</keyword>
<keyword id="KW-0808">Transferase</keyword>
<sequence length="343" mass="38250">MERYEIVKDIGSGNFGVAKLVRDKFSKELFAVKFIERGQKIDEHVQREIMNHRSLIHPNIIRFKEVLLTATHLALVMEYAAGGELFGRICSAGRFSEDEARFFFQQLISGVNYCHSLQICHRDLKLENTLLDGSEAPRVKICDFGYSKSGVLHSQPKTTVGTPAYIAPEVLSTKEYDGKIADVWSCGVTLYVMLVGAYPFEDPSDPKDFRKTIGRILKAQYAIPDYVRVSDECRHLLSRIFVANPEKRITIEEIKNHSWFLKNLPVEMYEGSLMMNGPSTQTVEEIVWIIEEARKPITVATGLAGAGGSGGSSNGAIGSSSMDLDDLDTDFDDIDTADLLSPL</sequence>
<dbReference type="EC" id="2.7.11.1"/>
<dbReference type="EMBL" id="AC013430">
    <property type="protein sequence ID" value="AAF71802.1"/>
    <property type="molecule type" value="Genomic_DNA"/>
</dbReference>
<dbReference type="EMBL" id="CP002684">
    <property type="protein sequence ID" value="AEE36091.1"/>
    <property type="molecule type" value="Genomic_DNA"/>
</dbReference>
<dbReference type="EMBL" id="CP002684">
    <property type="protein sequence ID" value="AEE36092.1"/>
    <property type="molecule type" value="Genomic_DNA"/>
</dbReference>
<dbReference type="EMBL" id="AF411782">
    <property type="protein sequence ID" value="AAL06472.1"/>
    <property type="molecule type" value="mRNA"/>
</dbReference>
<dbReference type="EMBL" id="BT020608">
    <property type="protein sequence ID" value="AAW80881.1"/>
    <property type="molecule type" value="mRNA"/>
</dbReference>
<dbReference type="EMBL" id="AY088883">
    <property type="protein sequence ID" value="AAM67189.1"/>
    <property type="molecule type" value="mRNA"/>
</dbReference>
<dbReference type="SMR" id="Q9M9E9"/>
<dbReference type="BioGRID" id="29383">
    <property type="interactions" value="2"/>
</dbReference>
<dbReference type="DIP" id="DIP-48987N"/>
<dbReference type="FunCoup" id="Q9M9E9">
    <property type="interactions" value="1132"/>
</dbReference>
<dbReference type="IntAct" id="Q9M9E9">
    <property type="interactions" value="3"/>
</dbReference>
<dbReference type="STRING" id="3702.Q9M9E9"/>
<dbReference type="iPTMnet" id="Q9M9E9"/>
<dbReference type="PaxDb" id="3702-AT1G78290.2"/>
<dbReference type="ProteomicsDB" id="226872"/>
<dbReference type="EnsemblPlants" id="AT1G78290.2">
    <property type="protein sequence ID" value="AT1G78290.2"/>
    <property type="gene ID" value="AT1G78290"/>
</dbReference>
<dbReference type="EnsemblPlants" id="AT1G78290.3">
    <property type="protein sequence ID" value="AT1G78290.3"/>
    <property type="gene ID" value="AT1G78290"/>
</dbReference>
<dbReference type="GeneID" id="844164"/>
<dbReference type="Gramene" id="AT1G78290.2">
    <property type="protein sequence ID" value="AT1G78290.2"/>
    <property type="gene ID" value="AT1G78290"/>
</dbReference>
<dbReference type="Gramene" id="AT1G78290.3">
    <property type="protein sequence ID" value="AT1G78290.3"/>
    <property type="gene ID" value="AT1G78290"/>
</dbReference>
<dbReference type="KEGG" id="ath:AT1G78290"/>
<dbReference type="Araport" id="AT1G78290"/>
<dbReference type="TAIR" id="AT1G78290">
    <property type="gene designation" value="SNRK2-8"/>
</dbReference>
<dbReference type="eggNOG" id="KOG0583">
    <property type="taxonomic scope" value="Eukaryota"/>
</dbReference>
<dbReference type="HOGENOM" id="CLU_000288_63_0_1"/>
<dbReference type="InParanoid" id="Q9M9E9"/>
<dbReference type="OMA" id="KPGDAMK"/>
<dbReference type="OrthoDB" id="193931at2759"/>
<dbReference type="PhylomeDB" id="Q9M9E9"/>
<dbReference type="PRO" id="PR:Q9M9E9"/>
<dbReference type="Proteomes" id="UP000006548">
    <property type="component" value="Chromosome 1"/>
</dbReference>
<dbReference type="ExpressionAtlas" id="Q9M9E9">
    <property type="expression patterns" value="baseline and differential"/>
</dbReference>
<dbReference type="GO" id="GO:0005737">
    <property type="term" value="C:cytoplasm"/>
    <property type="evidence" value="ECO:0000314"/>
    <property type="project" value="TAIR"/>
</dbReference>
<dbReference type="GO" id="GO:0005634">
    <property type="term" value="C:nucleus"/>
    <property type="evidence" value="ECO:0000314"/>
    <property type="project" value="TAIR"/>
</dbReference>
<dbReference type="GO" id="GO:0005524">
    <property type="term" value="F:ATP binding"/>
    <property type="evidence" value="ECO:0007669"/>
    <property type="project" value="UniProtKB-KW"/>
</dbReference>
<dbReference type="GO" id="GO:0106310">
    <property type="term" value="F:protein serine kinase activity"/>
    <property type="evidence" value="ECO:0007669"/>
    <property type="project" value="RHEA"/>
</dbReference>
<dbReference type="GO" id="GO:0004674">
    <property type="term" value="F:protein serine/threonine kinase activity"/>
    <property type="evidence" value="ECO:0007669"/>
    <property type="project" value="UniProtKB-KW"/>
</dbReference>
<dbReference type="GO" id="GO:0006970">
    <property type="term" value="P:response to osmotic stress"/>
    <property type="evidence" value="ECO:0000316"/>
    <property type="project" value="TAIR"/>
</dbReference>
<dbReference type="CDD" id="cd14662">
    <property type="entry name" value="STKc_SnRK2"/>
    <property type="match status" value="1"/>
</dbReference>
<dbReference type="FunFam" id="3.30.200.20:FF:000237">
    <property type="entry name" value="Serine/threonine-protein kinase SAPK2"/>
    <property type="match status" value="1"/>
</dbReference>
<dbReference type="FunFam" id="1.10.510.10:FF:000085">
    <property type="entry name" value="Serine/threonine-protein kinase SRK2E"/>
    <property type="match status" value="1"/>
</dbReference>
<dbReference type="Gene3D" id="3.30.200.20">
    <property type="entry name" value="Phosphorylase Kinase, domain 1"/>
    <property type="match status" value="1"/>
</dbReference>
<dbReference type="Gene3D" id="1.10.510.10">
    <property type="entry name" value="Transferase(Phosphotransferase) domain 1"/>
    <property type="match status" value="1"/>
</dbReference>
<dbReference type="InterPro" id="IPR011009">
    <property type="entry name" value="Kinase-like_dom_sf"/>
</dbReference>
<dbReference type="InterPro" id="IPR000719">
    <property type="entry name" value="Prot_kinase_dom"/>
</dbReference>
<dbReference type="InterPro" id="IPR017441">
    <property type="entry name" value="Protein_kinase_ATP_BS"/>
</dbReference>
<dbReference type="InterPro" id="IPR008271">
    <property type="entry name" value="Ser/Thr_kinase_AS"/>
</dbReference>
<dbReference type="PANTHER" id="PTHR24343">
    <property type="entry name" value="SERINE/THREONINE KINASE"/>
    <property type="match status" value="1"/>
</dbReference>
<dbReference type="PANTHER" id="PTHR24343:SF476">
    <property type="entry name" value="SERINE_THREONINE-PROTEIN KINASE SRK2C"/>
    <property type="match status" value="1"/>
</dbReference>
<dbReference type="Pfam" id="PF00069">
    <property type="entry name" value="Pkinase"/>
    <property type="match status" value="1"/>
</dbReference>
<dbReference type="SMART" id="SM00220">
    <property type="entry name" value="S_TKc"/>
    <property type="match status" value="1"/>
</dbReference>
<dbReference type="SUPFAM" id="SSF56112">
    <property type="entry name" value="Protein kinase-like (PK-like)"/>
    <property type="match status" value="1"/>
</dbReference>
<dbReference type="PROSITE" id="PS00107">
    <property type="entry name" value="PROTEIN_KINASE_ATP"/>
    <property type="match status" value="1"/>
</dbReference>
<dbReference type="PROSITE" id="PS50011">
    <property type="entry name" value="PROTEIN_KINASE_DOM"/>
    <property type="match status" value="1"/>
</dbReference>
<dbReference type="PROSITE" id="PS00108">
    <property type="entry name" value="PROTEIN_KINASE_ST"/>
    <property type="match status" value="1"/>
</dbReference>